<proteinExistence type="evidence at transcript level"/>
<organism>
    <name type="scientific">Drosophila melanogaster</name>
    <name type="common">Fruit fly</name>
    <dbReference type="NCBI Taxonomy" id="7227"/>
    <lineage>
        <taxon>Eukaryota</taxon>
        <taxon>Metazoa</taxon>
        <taxon>Ecdysozoa</taxon>
        <taxon>Arthropoda</taxon>
        <taxon>Hexapoda</taxon>
        <taxon>Insecta</taxon>
        <taxon>Pterygota</taxon>
        <taxon>Neoptera</taxon>
        <taxon>Endopterygota</taxon>
        <taxon>Diptera</taxon>
        <taxon>Brachycera</taxon>
        <taxon>Muscomorpha</taxon>
        <taxon>Ephydroidea</taxon>
        <taxon>Drosophilidae</taxon>
        <taxon>Drosophila</taxon>
        <taxon>Sophophora</taxon>
    </lineage>
</organism>
<evidence type="ECO:0000250" key="1"/>
<evidence type="ECO:0000255" key="2"/>
<evidence type="ECO:0000269" key="3">
    <source>
    </source>
</evidence>
<evidence type="ECO:0000305" key="4"/>
<protein>
    <recommendedName>
        <fullName>Larval serum protein 1 gamma chain</fullName>
    </recommendedName>
    <alternativeName>
        <fullName>Hexamerin-1-gamma</fullName>
    </alternativeName>
</protein>
<keyword id="KW-0325">Glycoprotein</keyword>
<keyword id="KW-1185">Reference proteome</keyword>
<keyword id="KW-0964">Secreted</keyword>
<keyword id="KW-0732">Signal</keyword>
<keyword id="KW-0758">Storage protein</keyword>
<name>LSP1G_DROME</name>
<accession>P11997</accession>
<accession>O16162</accession>
<accession>Q9W0V6</accession>
<reference key="1">
    <citation type="journal article" date="2000" name="Science">
        <title>The genome sequence of Drosophila melanogaster.</title>
        <authorList>
            <person name="Adams M.D."/>
            <person name="Celniker S.E."/>
            <person name="Holt R.A."/>
            <person name="Evans C.A."/>
            <person name="Gocayne J.D."/>
            <person name="Amanatides P.G."/>
            <person name="Scherer S.E."/>
            <person name="Li P.W."/>
            <person name="Hoskins R.A."/>
            <person name="Galle R.F."/>
            <person name="George R.A."/>
            <person name="Lewis S.E."/>
            <person name="Richards S."/>
            <person name="Ashburner M."/>
            <person name="Henderson S.N."/>
            <person name="Sutton G.G."/>
            <person name="Wortman J.R."/>
            <person name="Yandell M.D."/>
            <person name="Zhang Q."/>
            <person name="Chen L.X."/>
            <person name="Brandon R.C."/>
            <person name="Rogers Y.-H.C."/>
            <person name="Blazej R.G."/>
            <person name="Champe M."/>
            <person name="Pfeiffer B.D."/>
            <person name="Wan K.H."/>
            <person name="Doyle C."/>
            <person name="Baxter E.G."/>
            <person name="Helt G."/>
            <person name="Nelson C.R."/>
            <person name="Miklos G.L.G."/>
            <person name="Abril J.F."/>
            <person name="Agbayani A."/>
            <person name="An H.-J."/>
            <person name="Andrews-Pfannkoch C."/>
            <person name="Baldwin D."/>
            <person name="Ballew R.M."/>
            <person name="Basu A."/>
            <person name="Baxendale J."/>
            <person name="Bayraktaroglu L."/>
            <person name="Beasley E.M."/>
            <person name="Beeson K.Y."/>
            <person name="Benos P.V."/>
            <person name="Berman B.P."/>
            <person name="Bhandari D."/>
            <person name="Bolshakov S."/>
            <person name="Borkova D."/>
            <person name="Botchan M.R."/>
            <person name="Bouck J."/>
            <person name="Brokstein P."/>
            <person name="Brottier P."/>
            <person name="Burtis K.C."/>
            <person name="Busam D.A."/>
            <person name="Butler H."/>
            <person name="Cadieu E."/>
            <person name="Center A."/>
            <person name="Chandra I."/>
            <person name="Cherry J.M."/>
            <person name="Cawley S."/>
            <person name="Dahlke C."/>
            <person name="Davenport L.B."/>
            <person name="Davies P."/>
            <person name="de Pablos B."/>
            <person name="Delcher A."/>
            <person name="Deng Z."/>
            <person name="Mays A.D."/>
            <person name="Dew I."/>
            <person name="Dietz S.M."/>
            <person name="Dodson K."/>
            <person name="Doup L.E."/>
            <person name="Downes M."/>
            <person name="Dugan-Rocha S."/>
            <person name="Dunkov B.C."/>
            <person name="Dunn P."/>
            <person name="Durbin K.J."/>
            <person name="Evangelista C.C."/>
            <person name="Ferraz C."/>
            <person name="Ferriera S."/>
            <person name="Fleischmann W."/>
            <person name="Fosler C."/>
            <person name="Gabrielian A.E."/>
            <person name="Garg N.S."/>
            <person name="Gelbart W.M."/>
            <person name="Glasser K."/>
            <person name="Glodek A."/>
            <person name="Gong F."/>
            <person name="Gorrell J.H."/>
            <person name="Gu Z."/>
            <person name="Guan P."/>
            <person name="Harris M."/>
            <person name="Harris N.L."/>
            <person name="Harvey D.A."/>
            <person name="Heiman T.J."/>
            <person name="Hernandez J.R."/>
            <person name="Houck J."/>
            <person name="Hostin D."/>
            <person name="Houston K.A."/>
            <person name="Howland T.J."/>
            <person name="Wei M.-H."/>
            <person name="Ibegwam C."/>
            <person name="Jalali M."/>
            <person name="Kalush F."/>
            <person name="Karpen G.H."/>
            <person name="Ke Z."/>
            <person name="Kennison J.A."/>
            <person name="Ketchum K.A."/>
            <person name="Kimmel B.E."/>
            <person name="Kodira C.D."/>
            <person name="Kraft C.L."/>
            <person name="Kravitz S."/>
            <person name="Kulp D."/>
            <person name="Lai Z."/>
            <person name="Lasko P."/>
            <person name="Lei Y."/>
            <person name="Levitsky A.A."/>
            <person name="Li J.H."/>
            <person name="Li Z."/>
            <person name="Liang Y."/>
            <person name="Lin X."/>
            <person name="Liu X."/>
            <person name="Mattei B."/>
            <person name="McIntosh T.C."/>
            <person name="McLeod M.P."/>
            <person name="McPherson D."/>
            <person name="Merkulov G."/>
            <person name="Milshina N.V."/>
            <person name="Mobarry C."/>
            <person name="Morris J."/>
            <person name="Moshrefi A."/>
            <person name="Mount S.M."/>
            <person name="Moy M."/>
            <person name="Murphy B."/>
            <person name="Murphy L."/>
            <person name="Muzny D.M."/>
            <person name="Nelson D.L."/>
            <person name="Nelson D.R."/>
            <person name="Nelson K.A."/>
            <person name="Nixon K."/>
            <person name="Nusskern D.R."/>
            <person name="Pacleb J.M."/>
            <person name="Palazzolo M."/>
            <person name="Pittman G.S."/>
            <person name="Pan S."/>
            <person name="Pollard J."/>
            <person name="Puri V."/>
            <person name="Reese M.G."/>
            <person name="Reinert K."/>
            <person name="Remington K."/>
            <person name="Saunders R.D.C."/>
            <person name="Scheeler F."/>
            <person name="Shen H."/>
            <person name="Shue B.C."/>
            <person name="Siden-Kiamos I."/>
            <person name="Simpson M."/>
            <person name="Skupski M.P."/>
            <person name="Smith T.J."/>
            <person name="Spier E."/>
            <person name="Spradling A.C."/>
            <person name="Stapleton M."/>
            <person name="Strong R."/>
            <person name="Sun E."/>
            <person name="Svirskas R."/>
            <person name="Tector C."/>
            <person name="Turner R."/>
            <person name="Venter E."/>
            <person name="Wang A.H."/>
            <person name="Wang X."/>
            <person name="Wang Z.-Y."/>
            <person name="Wassarman D.A."/>
            <person name="Weinstock G.M."/>
            <person name="Weissenbach J."/>
            <person name="Williams S.M."/>
            <person name="Woodage T."/>
            <person name="Worley K.C."/>
            <person name="Wu D."/>
            <person name="Yang S."/>
            <person name="Yao Q.A."/>
            <person name="Ye J."/>
            <person name="Yeh R.-F."/>
            <person name="Zaveri J.S."/>
            <person name="Zhan M."/>
            <person name="Zhang G."/>
            <person name="Zhao Q."/>
            <person name="Zheng L."/>
            <person name="Zheng X.H."/>
            <person name="Zhong F.N."/>
            <person name="Zhong W."/>
            <person name="Zhou X."/>
            <person name="Zhu S.C."/>
            <person name="Zhu X."/>
            <person name="Smith H.O."/>
            <person name="Gibbs R.A."/>
            <person name="Myers E.W."/>
            <person name="Rubin G.M."/>
            <person name="Venter J.C."/>
        </authorList>
    </citation>
    <scope>NUCLEOTIDE SEQUENCE [LARGE SCALE GENOMIC DNA]</scope>
    <source>
        <strain>Berkeley</strain>
    </source>
</reference>
<reference key="2">
    <citation type="journal article" date="2002" name="Genome Biol.">
        <title>Annotation of the Drosophila melanogaster euchromatic genome: a systematic review.</title>
        <authorList>
            <person name="Misra S."/>
            <person name="Crosby M.A."/>
            <person name="Mungall C.J."/>
            <person name="Matthews B.B."/>
            <person name="Campbell K.S."/>
            <person name="Hradecky P."/>
            <person name="Huang Y."/>
            <person name="Kaminker J.S."/>
            <person name="Millburn G.H."/>
            <person name="Prochnik S.E."/>
            <person name="Smith C.D."/>
            <person name="Tupy J.L."/>
            <person name="Whitfield E.J."/>
            <person name="Bayraktaroglu L."/>
            <person name="Berman B.P."/>
            <person name="Bettencourt B.R."/>
            <person name="Celniker S.E."/>
            <person name="de Grey A.D.N.J."/>
            <person name="Drysdale R.A."/>
            <person name="Harris N.L."/>
            <person name="Richter J."/>
            <person name="Russo S."/>
            <person name="Schroeder A.J."/>
            <person name="Shu S.Q."/>
            <person name="Stapleton M."/>
            <person name="Yamada C."/>
            <person name="Ashburner M."/>
            <person name="Gelbart W.M."/>
            <person name="Rubin G.M."/>
            <person name="Lewis S.E."/>
        </authorList>
    </citation>
    <scope>GENOME REANNOTATION</scope>
    <source>
        <strain>Berkeley</strain>
    </source>
</reference>
<reference key="3">
    <citation type="journal article" date="2002" name="Genome Biol.">
        <title>A Drosophila full-length cDNA resource.</title>
        <authorList>
            <person name="Stapleton M."/>
            <person name="Carlson J.W."/>
            <person name="Brokstein P."/>
            <person name="Yu C."/>
            <person name="Champe M."/>
            <person name="George R.A."/>
            <person name="Guarin H."/>
            <person name="Kronmiller B."/>
            <person name="Pacleb J.M."/>
            <person name="Park S."/>
            <person name="Wan K.H."/>
            <person name="Rubin G.M."/>
            <person name="Celniker S.E."/>
        </authorList>
    </citation>
    <scope>NUCLEOTIDE SEQUENCE [LARGE SCALE MRNA]</scope>
    <source>
        <strain>Berkeley</strain>
        <tissue>Larva</tissue>
        <tissue>Pupae</tissue>
    </source>
</reference>
<reference key="4">
    <citation type="journal article" date="1997" name="Mol. Biol. Evol.">
        <title>Rates of DNA sequence evolution are not sex-biased in Drosophila melanogaster and D. simulans.</title>
        <authorList>
            <person name="Bauer V.L."/>
            <person name="Aquadro C.F."/>
        </authorList>
    </citation>
    <scope>NUCLEOTIDE SEQUENCE [GENOMIC DNA] OF 1-711</scope>
</reference>
<reference key="5">
    <citation type="journal article" date="1986" name="J. Mol. Biol.">
        <title>Sequence conservation around the 5' ends of the larval serum protein 1 genes of Drosophila melanogaster.</title>
        <authorList>
            <person name="Delaney S.J."/>
            <person name="Smith D.F."/>
            <person name="McClelland A."/>
            <person name="Sunkel C."/>
            <person name="Glover D.M."/>
        </authorList>
    </citation>
    <scope>NUCLEOTIDE SEQUENCE [GENOMIC DNA] OF 1-105</scope>
    <scope>SUBCELLULAR LOCATION</scope>
    <scope>TISSUE SPECIFICITY</scope>
</reference>
<dbReference type="EMBL" id="AE014296">
    <property type="protein sequence ID" value="AAF47324.1"/>
    <property type="molecule type" value="Genomic_DNA"/>
</dbReference>
<dbReference type="EMBL" id="AY069748">
    <property type="protein sequence ID" value="AAL39893.1"/>
    <property type="molecule type" value="mRNA"/>
</dbReference>
<dbReference type="EMBL" id="AF016033">
    <property type="protein sequence ID" value="AAB71666.1"/>
    <property type="molecule type" value="Genomic_DNA"/>
</dbReference>
<dbReference type="EMBL" id="X03874">
    <property type="protein sequence ID" value="CAA27508.1"/>
    <property type="status" value="ALT_FRAME"/>
    <property type="molecule type" value="Genomic_DNA"/>
</dbReference>
<dbReference type="PIR" id="C27144">
    <property type="entry name" value="C27144"/>
</dbReference>
<dbReference type="RefSeq" id="NP_523868.1">
    <property type="nucleotide sequence ID" value="NM_079144.5"/>
</dbReference>
<dbReference type="SMR" id="P11997"/>
<dbReference type="BioGRID" id="63580">
    <property type="interactions" value="3"/>
</dbReference>
<dbReference type="ComplexPortal" id="CPX-2224">
    <property type="entry name" value="Larval serum protein complex"/>
</dbReference>
<dbReference type="FunCoup" id="P11997">
    <property type="interactions" value="4"/>
</dbReference>
<dbReference type="STRING" id="7227.FBpp0072365"/>
<dbReference type="GlyCosmos" id="P11997">
    <property type="glycosylation" value="1 site, No reported glycans"/>
</dbReference>
<dbReference type="GlyGen" id="P11997">
    <property type="glycosylation" value="2 sites, 1 O-linked glycan (1 site)"/>
</dbReference>
<dbReference type="PaxDb" id="7227-FBpp0072365"/>
<dbReference type="DNASU" id="38015"/>
<dbReference type="EnsemblMetazoa" id="FBtr0072463">
    <property type="protein sequence ID" value="FBpp0072365"/>
    <property type="gene ID" value="FBgn0002564"/>
</dbReference>
<dbReference type="GeneID" id="38015"/>
<dbReference type="KEGG" id="dme:Dmel_CG6821"/>
<dbReference type="AGR" id="FB:FBgn0002564"/>
<dbReference type="CTD" id="38015"/>
<dbReference type="FlyBase" id="FBgn0002564">
    <property type="gene designation" value="Lsp1gamma"/>
</dbReference>
<dbReference type="VEuPathDB" id="VectorBase:FBgn0002564"/>
<dbReference type="eggNOG" id="ENOG502QR98">
    <property type="taxonomic scope" value="Eukaryota"/>
</dbReference>
<dbReference type="GeneTree" id="ENSGT00940000165243"/>
<dbReference type="HOGENOM" id="CLU_012213_1_0_1"/>
<dbReference type="InParanoid" id="P11997"/>
<dbReference type="OMA" id="EWIKMGQ"/>
<dbReference type="OrthoDB" id="6371642at2759"/>
<dbReference type="PhylomeDB" id="P11997"/>
<dbReference type="BioGRID-ORCS" id="38015">
    <property type="hits" value="0 hits in 1 CRISPR screen"/>
</dbReference>
<dbReference type="ChiTaRS" id="Lsp1gamma">
    <property type="organism name" value="fly"/>
</dbReference>
<dbReference type="GenomeRNAi" id="38015"/>
<dbReference type="PRO" id="PR:P11997"/>
<dbReference type="Proteomes" id="UP000000803">
    <property type="component" value="Chromosome 3L"/>
</dbReference>
<dbReference type="Bgee" id="FBgn0002564">
    <property type="expression patterns" value="Expressed in fat body cell in testis and 22 other cell types or tissues"/>
</dbReference>
<dbReference type="ExpressionAtlas" id="P11997">
    <property type="expression patterns" value="baseline and differential"/>
</dbReference>
<dbReference type="GO" id="GO:0005615">
    <property type="term" value="C:extracellular space"/>
    <property type="evidence" value="ECO:0000314"/>
    <property type="project" value="FlyBase"/>
</dbReference>
<dbReference type="GO" id="GO:0005616">
    <property type="term" value="C:larval serum protein complex"/>
    <property type="evidence" value="ECO:0000314"/>
    <property type="project" value="FlyBase"/>
</dbReference>
<dbReference type="GO" id="GO:0045735">
    <property type="term" value="F:nutrient reservoir activity"/>
    <property type="evidence" value="ECO:0000315"/>
    <property type="project" value="FlyBase"/>
</dbReference>
<dbReference type="GO" id="GO:0097009">
    <property type="term" value="P:energy homeostasis"/>
    <property type="evidence" value="ECO:0000315"/>
    <property type="project" value="FlyBase"/>
</dbReference>
<dbReference type="FunFam" id="1.10.1280.10:FF:000006">
    <property type="entry name" value="Larval serum protein 1 gamma"/>
    <property type="match status" value="1"/>
</dbReference>
<dbReference type="FunFam" id="1.20.1370.10:FF:000003">
    <property type="entry name" value="Larval serum protein 1 gamma"/>
    <property type="match status" value="1"/>
</dbReference>
<dbReference type="FunFam" id="2.60.40.1520:FF:000002">
    <property type="entry name" value="Larval serum protein 2"/>
    <property type="match status" value="1"/>
</dbReference>
<dbReference type="Gene3D" id="1.10.1280.10">
    <property type="entry name" value="Di-copper center containing domain from catechol oxidase"/>
    <property type="match status" value="1"/>
</dbReference>
<dbReference type="Gene3D" id="2.60.40.1520">
    <property type="entry name" value="Hemocyanin, C-terminal domain"/>
    <property type="match status" value="1"/>
</dbReference>
<dbReference type="Gene3D" id="1.20.1370.10">
    <property type="entry name" value="Hemocyanin, N-terminal domain"/>
    <property type="match status" value="1"/>
</dbReference>
<dbReference type="InterPro" id="IPR008922">
    <property type="entry name" value="Di-copper_centre_dom_sf"/>
</dbReference>
<dbReference type="InterPro" id="IPR013788">
    <property type="entry name" value="Hemocyanin/hexamerin"/>
</dbReference>
<dbReference type="InterPro" id="IPR000896">
    <property type="entry name" value="Hemocyanin/hexamerin_mid_dom"/>
</dbReference>
<dbReference type="InterPro" id="IPR005203">
    <property type="entry name" value="Hemocyanin_C"/>
</dbReference>
<dbReference type="InterPro" id="IPR037020">
    <property type="entry name" value="Hemocyanin_C_sf"/>
</dbReference>
<dbReference type="InterPro" id="IPR005204">
    <property type="entry name" value="Hemocyanin_N"/>
</dbReference>
<dbReference type="InterPro" id="IPR036697">
    <property type="entry name" value="Hemocyanin_N_sf"/>
</dbReference>
<dbReference type="InterPro" id="IPR014756">
    <property type="entry name" value="Ig_E-set"/>
</dbReference>
<dbReference type="PANTHER" id="PTHR11511:SF5">
    <property type="entry name" value="FAT-BODY PROTEIN 1-RELATED"/>
    <property type="match status" value="1"/>
</dbReference>
<dbReference type="PANTHER" id="PTHR11511">
    <property type="entry name" value="LARVAL STORAGE PROTEIN/PHENOLOXIDASE"/>
    <property type="match status" value="1"/>
</dbReference>
<dbReference type="Pfam" id="PF03723">
    <property type="entry name" value="Hemocyanin_C"/>
    <property type="match status" value="1"/>
</dbReference>
<dbReference type="Pfam" id="PF00372">
    <property type="entry name" value="Hemocyanin_M"/>
    <property type="match status" value="1"/>
</dbReference>
<dbReference type="Pfam" id="PF03722">
    <property type="entry name" value="Hemocyanin_N"/>
    <property type="match status" value="1"/>
</dbReference>
<dbReference type="PRINTS" id="PR00187">
    <property type="entry name" value="HAEMOCYANIN"/>
</dbReference>
<dbReference type="SUPFAM" id="SSF48056">
    <property type="entry name" value="Di-copper centre-containing domain"/>
    <property type="match status" value="1"/>
</dbReference>
<dbReference type="SUPFAM" id="SSF81296">
    <property type="entry name" value="E set domains"/>
    <property type="match status" value="1"/>
</dbReference>
<dbReference type="SUPFAM" id="SSF48050">
    <property type="entry name" value="Hemocyanin, N-terminal domain"/>
    <property type="match status" value="1"/>
</dbReference>
<dbReference type="PROSITE" id="PS00210">
    <property type="entry name" value="HEMOCYANIN_2"/>
    <property type="match status" value="1"/>
</dbReference>
<gene>
    <name type="primary">Lsp1gamma</name>
    <name type="synonym">Lsp1-g</name>
    <name type="ORF">CG6821</name>
</gene>
<comment type="function">
    <text evidence="1">Larval storage protein (LSP) which may serve as a store of amino acids for synthesis of adult proteins.</text>
</comment>
<comment type="subunit">
    <text>Heterohexamer, composed of three subunits, alpha, beta and gamma.</text>
</comment>
<comment type="subcellular location">
    <subcellularLocation>
        <location evidence="3">Secreted</location>
        <location evidence="3">Extracellular space</location>
    </subcellularLocation>
</comment>
<comment type="tissue specificity">
    <text evidence="3">Larval hemolymph.</text>
</comment>
<comment type="similarity">
    <text evidence="4">Belongs to the hemocyanin family.</text>
</comment>
<comment type="sequence caution" evidence="4">
    <conflict type="frameshift">
        <sequence resource="EMBL-CDS" id="CAA27508"/>
    </conflict>
</comment>
<sequence length="772" mass="93408">MKLTLVILALVACVTAFSVPTQKVKIADKNFLEKQKFLFEIVHRIDEPLMFEEWIKMGQKLITDKAQYETFDFYMEKLWESYKLGALLPKGEFFGALVKTHHKQAYGLFNFFYYAKDWETFVRNVAWARIHVNEGMFVYALTLAVIHKPEFEGLILPQIYEIFPQYFFNSKFVYAAEKFDYEVFSKLTMYEKEYKDILYKDYSEFTGNFYFYTKDWKTWQWYKMMGLDQEWYVEDKYFLRENLSQFVNDPKYVDVVKGLKKFYMPVDYTRDIDFFNDETKMTYFTEDLGWNAYWYYLNMDYAFFLNGKQFGLDKDRRGEYWIYNVQQILARYYQERLANGFGEIPEFFWYKQIEYGYDPQLIYYNGIGYSYRKNYYDFYTYGKFEMYSQIQNFFSRVYKVLETGFYKTADGQVFDLHKPEAIKIVGNYLQGNADTFDKYFFNYYYLLAHMYFADVDYNDMEVFPNVFLNFETMLRDPFFYTFYKKFTDVFYTFKYYLKPYTQKDLFYEGITIKDVSVSKLVTYYDIVDFDVTNLLNDKMTFVDGQYIWDKALLARQARLNHKPFNFEFTIDSDKVQKGVVRVFLGPKFDEYGRVIPLDYNRKNFVQIDSFVYPFIAGTNTIKRSSKEFSWTAEDRITYTELYKYVMLASEGKYDFPLDISEPHNAFPDRLVLPKGWEQGMPMQFYFFVSPFAETYEQFSNFDYTYSSGVGSGTRFVDTKPFGYPFDRQIDESDFFVPNGFFKDVKVYYVDTFAKYFEKKYTQFGTFDYSIEY</sequence>
<feature type="signal peptide" evidence="2">
    <location>
        <begin position="1"/>
        <end position="16"/>
    </location>
</feature>
<feature type="chain" id="PRO_0000013335" description="Larval serum protein 1 gamma chain">
    <location>
        <begin position="17"/>
        <end position="772"/>
    </location>
</feature>
<feature type="glycosylation site" description="N-linked (GlcNAc...) asparagine" evidence="2">
    <location>
        <position position="242"/>
    </location>
</feature>
<feature type="sequence conflict" description="In Ref. 4; AAB71666." evidence="4" ref="4">
    <original>QQI</original>
    <variation>SRS</variation>
    <location>
        <begin position="326"/>
        <end position="328"/>
    </location>
</feature>
<feature type="sequence conflict" description="In Ref. 4; AAB71666." evidence="4" ref="4">
    <original>S</original>
    <variation>T</variation>
    <location>
        <position position="624"/>
    </location>
</feature>